<keyword id="KW-0067">ATP-binding</keyword>
<keyword id="KW-0238">DNA-binding</keyword>
<keyword id="KW-0413">Isomerase</keyword>
<keyword id="KW-0460">Magnesium</keyword>
<keyword id="KW-0479">Metal-binding</keyword>
<keyword id="KW-0547">Nucleotide-binding</keyword>
<keyword id="KW-0539">Nucleus</keyword>
<keyword id="KW-0597">Phosphoprotein</keyword>
<keyword id="KW-0799">Topoisomerase</keyword>
<gene>
    <name type="primary">TOP2</name>
</gene>
<protein>
    <recommendedName>
        <fullName>DNA topoisomerase 2</fullName>
        <ecNumber evidence="3">5.6.2.2</ecNumber>
    </recommendedName>
    <alternativeName>
        <fullName>DNA topoisomerase II</fullName>
    </alternativeName>
</protein>
<reference key="1">
    <citation type="journal article" date="1997" name="Biochem. J.">
        <title>Molecular cloning and expression of the Candida albicans TOP2 gene allows study of fungal DNA topoisomerase II inhibitors in yeast.</title>
        <authorList>
            <person name="Keller B.A."/>
            <person name="Patel S."/>
            <person name="Fisher L.M."/>
        </authorList>
    </citation>
    <scope>NUCLEOTIDE SEQUENCE [GENOMIC DNA]</scope>
    <source>
        <strain>Hannington 2402E</strain>
    </source>
</reference>
<organism>
    <name type="scientific">Candida albicans</name>
    <name type="common">Yeast</name>
    <dbReference type="NCBI Taxonomy" id="5476"/>
    <lineage>
        <taxon>Eukaryota</taxon>
        <taxon>Fungi</taxon>
        <taxon>Dikarya</taxon>
        <taxon>Ascomycota</taxon>
        <taxon>Saccharomycotina</taxon>
        <taxon>Pichiomycetes</taxon>
        <taxon>Debaryomycetaceae</taxon>
        <taxon>Candida/Lodderomyces clade</taxon>
        <taxon>Candida</taxon>
    </lineage>
</organism>
<comment type="function">
    <text>Control of topological states of DNA by transient breakage and subsequent rejoining of DNA strands. Topoisomerase II makes double-strand breaks.</text>
</comment>
<comment type="catalytic activity">
    <reaction evidence="3">
        <text>ATP-dependent breakage, passage and rejoining of double-stranded DNA.</text>
        <dbReference type="EC" id="5.6.2.2"/>
    </reaction>
</comment>
<comment type="cofactor">
    <cofactor evidence="3">
        <name>Mg(2+)</name>
        <dbReference type="ChEBI" id="CHEBI:18420"/>
    </cofactor>
    <cofactor evidence="3">
        <name>Mn(2+)</name>
        <dbReference type="ChEBI" id="CHEBI:29035"/>
    </cofactor>
    <cofactor evidence="3">
        <name>Ca(2+)</name>
        <dbReference type="ChEBI" id="CHEBI:29108"/>
    </cofactor>
    <text evidence="3">Binds two Mg(2+) per subunit. The magnesium ions form salt bridges with both the protein and the DNA. Can also accept other divalent metal cations, such as Mn(2+) or Ca(2+).</text>
</comment>
<comment type="subunit">
    <text evidence="1">Homodimer.</text>
</comment>
<comment type="subcellular location">
    <subcellularLocation>
        <location>Nucleus</location>
    </subcellularLocation>
</comment>
<comment type="miscellaneous">
    <text>Eukaryotic topoisomerase I and II can relax both negative and positive supercoils, whereas prokaryotic enzymes relax only negative supercoils.</text>
</comment>
<comment type="similarity">
    <text evidence="6">Belongs to the type II topoisomerase family.</text>
</comment>
<proteinExistence type="inferred from homology"/>
<feature type="chain" id="PRO_0000145382" description="DNA topoisomerase 2">
    <location>
        <begin position="1"/>
        <end position="1461"/>
    </location>
</feature>
<feature type="domain" description="Toprim" evidence="3">
    <location>
        <begin position="498"/>
        <end position="614"/>
    </location>
</feature>
<feature type="domain" description="Topo IIA-type catalytic" evidence="4">
    <location>
        <begin position="752"/>
        <end position="1226"/>
    </location>
</feature>
<feature type="region of interest" description="Disordered" evidence="5">
    <location>
        <begin position="1"/>
        <end position="61"/>
    </location>
</feature>
<feature type="region of interest" description="Interaction with DNA" evidence="2">
    <location>
        <begin position="382"/>
        <end position="389"/>
    </location>
</feature>
<feature type="region of interest" description="Interaction with DNA" evidence="2">
    <location>
        <begin position="1024"/>
        <end position="1033"/>
    </location>
</feature>
<feature type="region of interest" description="Disordered" evidence="5">
    <location>
        <begin position="1122"/>
        <end position="1155"/>
    </location>
</feature>
<feature type="region of interest" description="Disordered" evidence="5">
    <location>
        <begin position="1244"/>
        <end position="1461"/>
    </location>
</feature>
<feature type="compositionally biased region" description="Acidic residues" evidence="5">
    <location>
        <begin position="1"/>
        <end position="17"/>
    </location>
</feature>
<feature type="compositionally biased region" description="Low complexity" evidence="5">
    <location>
        <begin position="41"/>
        <end position="52"/>
    </location>
</feature>
<feature type="compositionally biased region" description="Acidic residues" evidence="5">
    <location>
        <begin position="1133"/>
        <end position="1153"/>
    </location>
</feature>
<feature type="compositionally biased region" description="Basic residues" evidence="5">
    <location>
        <begin position="1251"/>
        <end position="1261"/>
    </location>
</feature>
<feature type="compositionally biased region" description="Basic and acidic residues" evidence="5">
    <location>
        <begin position="1274"/>
        <end position="1283"/>
    </location>
</feature>
<feature type="compositionally biased region" description="Basic and acidic residues" evidence="5">
    <location>
        <begin position="1406"/>
        <end position="1417"/>
    </location>
</feature>
<feature type="compositionally biased region" description="Acidic residues" evidence="5">
    <location>
        <begin position="1434"/>
        <end position="1461"/>
    </location>
</feature>
<feature type="active site" description="O-(5'-phospho-DNA)-tyrosine intermediate" evidence="4">
    <location>
        <position position="842"/>
    </location>
</feature>
<feature type="binding site" evidence="2">
    <location>
        <position position="120"/>
    </location>
    <ligand>
        <name>ATP</name>
        <dbReference type="ChEBI" id="CHEBI:30616"/>
    </ligand>
</feature>
<feature type="binding site" evidence="2">
    <location>
        <position position="149"/>
    </location>
    <ligand>
        <name>ATP</name>
        <dbReference type="ChEBI" id="CHEBI:30616"/>
    </ligand>
</feature>
<feature type="binding site" evidence="2">
    <location>
        <begin position="177"/>
        <end position="179"/>
    </location>
    <ligand>
        <name>ATP</name>
        <dbReference type="ChEBI" id="CHEBI:30616"/>
    </ligand>
</feature>
<feature type="binding site" evidence="2">
    <location>
        <begin position="190"/>
        <end position="197"/>
    </location>
    <ligand>
        <name>ATP</name>
        <dbReference type="ChEBI" id="CHEBI:30616"/>
    </ligand>
</feature>
<feature type="binding site" evidence="2">
    <location>
        <begin position="418"/>
        <end position="420"/>
    </location>
    <ligand>
        <name>ATP</name>
        <dbReference type="ChEBI" id="CHEBI:30616"/>
    </ligand>
</feature>
<feature type="binding site" evidence="3">
    <location>
        <position position="504"/>
    </location>
    <ligand>
        <name>Mg(2+)</name>
        <dbReference type="ChEBI" id="CHEBI:18420"/>
        <label>1</label>
        <note>catalytic</note>
    </ligand>
</feature>
<feature type="binding site" evidence="3">
    <location>
        <position position="583"/>
    </location>
    <ligand>
        <name>Mg(2+)</name>
        <dbReference type="ChEBI" id="CHEBI:18420"/>
        <label>1</label>
        <note>catalytic</note>
    </ligand>
</feature>
<feature type="binding site" evidence="3">
    <location>
        <position position="583"/>
    </location>
    <ligand>
        <name>Mg(2+)</name>
        <dbReference type="ChEBI" id="CHEBI:18420"/>
        <label>2</label>
    </ligand>
</feature>
<feature type="binding site" evidence="3">
    <location>
        <position position="585"/>
    </location>
    <ligand>
        <name>Mg(2+)</name>
        <dbReference type="ChEBI" id="CHEBI:18420"/>
        <label>2</label>
    </ligand>
</feature>
<feature type="site" description="Interaction with DNA" evidence="3">
    <location>
        <position position="532"/>
    </location>
</feature>
<feature type="site" description="Interaction with DNA" evidence="3">
    <location>
        <position position="535"/>
    </location>
</feature>
<feature type="site" description="Interaction with DNA" evidence="3">
    <location>
        <position position="710"/>
    </location>
</feature>
<feature type="site" description="Interaction with DNA" evidence="3">
    <location>
        <position position="711"/>
    </location>
</feature>
<feature type="site" description="Interaction with DNA" evidence="3">
    <location>
        <position position="760"/>
    </location>
</feature>
<feature type="site" description="Interaction with DNA" evidence="3">
    <location>
        <position position="794"/>
    </location>
</feature>
<feature type="site" description="Interaction with DNA" evidence="3">
    <location>
        <position position="800"/>
    </location>
</feature>
<feature type="site" description="Transition state stabilizer" evidence="1">
    <location>
        <position position="841"/>
    </location>
</feature>
<feature type="site" description="Important for DNA bending; intercalates between base pairs of target DNA" evidence="1">
    <location>
        <position position="893"/>
    </location>
</feature>
<feature type="site" description="Interaction with DNA" evidence="3">
    <location>
        <position position="968"/>
    </location>
</feature>
<accession>P87078</accession>
<name>TOP2_CANAX</name>
<sequence>MSESESDYFTDGSEDDFVPTSKKSTKKNASSKSKQPLGDATNSTVSSSRSSTPKPTNASETYQKLSQLEHILKRPDTYIGSVEKTKTEMWCFDAETESMVFKEVTIVPGLYKIFDEILVNAADNKIRDPSMKNIRVKIDAENNIIEVMNDGKGIPIEMHTKENMYIPELIFGNLLTSSNYDDDQKKVTGGRNGFGAKLCNIFSTQFEVETADLNMGKLYKQSWTNNMSNVSKPKITTLRTKKEYTKITFRPDLSKFDMDCLDNDLLSVLRRRVYDLCGTVKNCNIYLNDKRLNISSFKGYVEMYVKAIKERSPEPEPQDGTIKNFTTIVHEVFNDRWEVAFAVSDGSFNQVSFVNSIATTSGGTHVKYVSDQIINKLVETLSKKEKGKKKLMIKPQEVRDNMFLFINCLIENPAFTSQTKEQLTTKVSQFGGKDKFVANDNLINRILKTSIVDKIRAIANANEDKALQKADGSRKSRIKGQVNLVDANKAGTKDGHNCTLILTEGLSAMNLAVAGLSVVGRDYYGCFPLRGKLLNVREASADQISKNAEINSLKQIIGLQHKKVYTAENIKSLRYGHIMIMTDQDQDGSHIKGLIINFLETSFPGLLDIPGFLLEFITPIVKVTVKARGAGGKRVIPFYTMPEFEHWRDTEGKQCRWTQKYYKGLGTSTPMEAREYFTALDRHLKRFHALQGEDKDYIDLAFSKKKADERKEWLQGFLPGTHLDPEITEIPISDFINKEFILFSMSDNVRSIPSVLDGFKPGQRKVLYGCFKKKLRSEIKVAQLAGYVSENTGYHHGEQSLVQTIIGLAQNFVGSNNINVLKPNGSFGSRAAGGKDFSAARYIFTELSEITRKIFNPLDDPLYTYVQDDEQTVEPEWYLPVLPMILVNGAEGIGTGWSTNIPSYNPKDLVTNIRRLMNGEELQEMTPWYKGWGGDLEPMGPQKFKVSGRIEQIDSNTVEITEIPVKTWTNNVKEFLLSGFGNEKTQPWIKDMEEHHTTSIRFVVKLTDAEMQKSLRIGLLERFKLVSSLSLANMVAFDPMGRIKKYNDVLEIIKDFYYVRLEYYQKRKDYMTDNLQNQLLMLSEQARFIKMIIEKQLSVANKKKKQLVALLEEHNFTKFSKDGKPIKSSEELLTGDDADEEEETQEQEGDEDVGNTSVANIQEGEPEQAAHVPETIYSSYDYLLGMAIWSLTYERFMRIMQQRDQKEAELNALLSKSAKDLWNQDLDEFLAEFDKFLLRDEQERESLASNGKKKSTKRRAKATATKDQPNNKKVKVEPKEKKSTSAKPIVKKEASNEPQASSSSKPKEKDDILSFFSSSSSSAKKTTKPSGRATSNKEIETITLFSDDDDDEDIFNLNSSSSTKVKKEAKSRSATPAAEKSKKSKSSGKQSILDELEDLEILGNFDKPEPKERRTRETASTTKRNTKKKPVIIDSDDEDEDEEDDIVMSDGDDDDDFIVDE</sequence>
<evidence type="ECO:0000250" key="1"/>
<evidence type="ECO:0000250" key="2">
    <source>
        <dbReference type="UniProtKB" id="P06786"/>
    </source>
</evidence>
<evidence type="ECO:0000255" key="3">
    <source>
        <dbReference type="PROSITE-ProRule" id="PRU00995"/>
    </source>
</evidence>
<evidence type="ECO:0000255" key="4">
    <source>
        <dbReference type="PROSITE-ProRule" id="PRU01384"/>
    </source>
</evidence>
<evidence type="ECO:0000256" key="5">
    <source>
        <dbReference type="SAM" id="MobiDB-lite"/>
    </source>
</evidence>
<evidence type="ECO:0000305" key="6"/>
<dbReference type="EC" id="5.6.2.2" evidence="3"/>
<dbReference type="EMBL" id="Y10377">
    <property type="protein sequence ID" value="CAA71405.1"/>
    <property type="molecule type" value="Genomic_DNA"/>
</dbReference>
<dbReference type="SMR" id="P87078"/>
<dbReference type="VEuPathDB" id="FungiDB:C4_06600W_A"/>
<dbReference type="VEuPathDB" id="FungiDB:CAWG_03168"/>
<dbReference type="GO" id="GO:0097047">
    <property type="term" value="C:DNA replication termination region"/>
    <property type="evidence" value="ECO:0007669"/>
    <property type="project" value="EnsemblFungi"/>
</dbReference>
<dbReference type="GO" id="GO:0000795">
    <property type="term" value="C:synaptonemal complex"/>
    <property type="evidence" value="ECO:0007669"/>
    <property type="project" value="EnsemblFungi"/>
</dbReference>
<dbReference type="GO" id="GO:0005524">
    <property type="term" value="F:ATP binding"/>
    <property type="evidence" value="ECO:0007669"/>
    <property type="project" value="UniProtKB-KW"/>
</dbReference>
<dbReference type="GO" id="GO:0003677">
    <property type="term" value="F:DNA binding"/>
    <property type="evidence" value="ECO:0007669"/>
    <property type="project" value="UniProtKB-KW"/>
</dbReference>
<dbReference type="GO" id="GO:0003918">
    <property type="term" value="F:DNA topoisomerase type II (double strand cut, ATP-hydrolyzing) activity"/>
    <property type="evidence" value="ECO:0007669"/>
    <property type="project" value="UniProtKB-EC"/>
</dbReference>
<dbReference type="GO" id="GO:0042802">
    <property type="term" value="F:identical protein binding"/>
    <property type="evidence" value="ECO:0007669"/>
    <property type="project" value="EnsemblFungi"/>
</dbReference>
<dbReference type="GO" id="GO:0046872">
    <property type="term" value="F:metal ion binding"/>
    <property type="evidence" value="ECO:0007669"/>
    <property type="project" value="UniProtKB-KW"/>
</dbReference>
<dbReference type="GO" id="GO:0031055">
    <property type="term" value="P:chromatin remodeling at centromere"/>
    <property type="evidence" value="ECO:0007669"/>
    <property type="project" value="EnsemblFungi"/>
</dbReference>
<dbReference type="GO" id="GO:0006271">
    <property type="term" value="P:DNA strand elongation involved in DNA replication"/>
    <property type="evidence" value="ECO:0007669"/>
    <property type="project" value="EnsemblFungi"/>
</dbReference>
<dbReference type="GO" id="GO:0006265">
    <property type="term" value="P:DNA topological change"/>
    <property type="evidence" value="ECO:0007669"/>
    <property type="project" value="EnsemblFungi"/>
</dbReference>
<dbReference type="GO" id="GO:0000019">
    <property type="term" value="P:regulation of mitotic recombination"/>
    <property type="evidence" value="ECO:0007669"/>
    <property type="project" value="EnsemblFungi"/>
</dbReference>
<dbReference type="GO" id="GO:0097046">
    <property type="term" value="P:replication fork progression beyond termination site"/>
    <property type="evidence" value="ECO:0007669"/>
    <property type="project" value="EnsemblFungi"/>
</dbReference>
<dbReference type="GO" id="GO:0000712">
    <property type="term" value="P:resolution of meiotic recombination intermediates"/>
    <property type="evidence" value="ECO:0007669"/>
    <property type="project" value="TreeGrafter"/>
</dbReference>
<dbReference type="GO" id="GO:0009303">
    <property type="term" value="P:rRNA transcription"/>
    <property type="evidence" value="ECO:0007669"/>
    <property type="project" value="EnsemblFungi"/>
</dbReference>
<dbReference type="GO" id="GO:0000819">
    <property type="term" value="P:sister chromatid segregation"/>
    <property type="evidence" value="ECO:0007669"/>
    <property type="project" value="TreeGrafter"/>
</dbReference>
<dbReference type="GO" id="GO:0000722">
    <property type="term" value="P:telomere maintenance via recombination"/>
    <property type="evidence" value="ECO:0007669"/>
    <property type="project" value="EnsemblFungi"/>
</dbReference>
<dbReference type="CDD" id="cd16930">
    <property type="entry name" value="HATPase_TopII-like"/>
    <property type="match status" value="1"/>
</dbReference>
<dbReference type="CDD" id="cd00187">
    <property type="entry name" value="TOP4c"/>
    <property type="match status" value="1"/>
</dbReference>
<dbReference type="CDD" id="cd03481">
    <property type="entry name" value="TopoIIA_Trans_ScTopoIIA"/>
    <property type="match status" value="1"/>
</dbReference>
<dbReference type="CDD" id="cd03365">
    <property type="entry name" value="TOPRIM_TopoIIA"/>
    <property type="match status" value="1"/>
</dbReference>
<dbReference type="FunFam" id="3.30.1360.40:FF:000011">
    <property type="entry name" value="DNA topoisomerase 2"/>
    <property type="match status" value="1"/>
</dbReference>
<dbReference type="FunFam" id="3.30.1490.30:FF:000001">
    <property type="entry name" value="DNA topoisomerase 2"/>
    <property type="match status" value="1"/>
</dbReference>
<dbReference type="FunFam" id="3.30.230.10:FF:000008">
    <property type="entry name" value="DNA topoisomerase 2"/>
    <property type="match status" value="1"/>
</dbReference>
<dbReference type="FunFam" id="3.30.565.10:FF:000004">
    <property type="entry name" value="DNA topoisomerase 2"/>
    <property type="match status" value="1"/>
</dbReference>
<dbReference type="FunFam" id="3.40.50.670:FF:000001">
    <property type="entry name" value="DNA topoisomerase 2"/>
    <property type="match status" value="2"/>
</dbReference>
<dbReference type="FunFam" id="3.90.199.10:FF:000002">
    <property type="entry name" value="DNA topoisomerase 2"/>
    <property type="match status" value="1"/>
</dbReference>
<dbReference type="Gene3D" id="3.30.1360.40">
    <property type="match status" value="1"/>
</dbReference>
<dbReference type="Gene3D" id="3.30.1490.30">
    <property type="match status" value="1"/>
</dbReference>
<dbReference type="Gene3D" id="3.30.230.10">
    <property type="match status" value="1"/>
</dbReference>
<dbReference type="Gene3D" id="3.40.50.670">
    <property type="match status" value="1"/>
</dbReference>
<dbReference type="Gene3D" id="3.30.565.10">
    <property type="entry name" value="Histidine kinase-like ATPase, C-terminal domain"/>
    <property type="match status" value="1"/>
</dbReference>
<dbReference type="Gene3D" id="3.90.199.10">
    <property type="entry name" value="Topoisomerase II, domain 5"/>
    <property type="match status" value="1"/>
</dbReference>
<dbReference type="Gene3D" id="1.10.268.10">
    <property type="entry name" value="Topoisomerase, domain 3"/>
    <property type="match status" value="1"/>
</dbReference>
<dbReference type="InterPro" id="IPR050634">
    <property type="entry name" value="DNA_Topoisomerase_II"/>
</dbReference>
<dbReference type="InterPro" id="IPR036890">
    <property type="entry name" value="HATPase_C_sf"/>
</dbReference>
<dbReference type="InterPro" id="IPR020568">
    <property type="entry name" value="Ribosomal_Su5_D2-typ_SF"/>
</dbReference>
<dbReference type="InterPro" id="IPR014721">
    <property type="entry name" value="Ribsml_uS5_D2-typ_fold_subgr"/>
</dbReference>
<dbReference type="InterPro" id="IPR001241">
    <property type="entry name" value="Topo_IIA"/>
</dbReference>
<dbReference type="InterPro" id="IPR013760">
    <property type="entry name" value="Topo_IIA-like_dom_sf"/>
</dbReference>
<dbReference type="InterPro" id="IPR013758">
    <property type="entry name" value="Topo_IIA_A/C_ab"/>
</dbReference>
<dbReference type="InterPro" id="IPR013757">
    <property type="entry name" value="Topo_IIA_A_a_sf"/>
</dbReference>
<dbReference type="InterPro" id="IPR013759">
    <property type="entry name" value="Topo_IIA_B_C"/>
</dbReference>
<dbReference type="InterPro" id="IPR013506">
    <property type="entry name" value="Topo_IIA_bsu_dom2"/>
</dbReference>
<dbReference type="InterPro" id="IPR002205">
    <property type="entry name" value="Topo_IIA_dom_A"/>
</dbReference>
<dbReference type="InterPro" id="IPR001154">
    <property type="entry name" value="TopoII_euk"/>
</dbReference>
<dbReference type="InterPro" id="IPR031660">
    <property type="entry name" value="TOPRIM_C"/>
</dbReference>
<dbReference type="InterPro" id="IPR006171">
    <property type="entry name" value="TOPRIM_dom"/>
</dbReference>
<dbReference type="InterPro" id="IPR034157">
    <property type="entry name" value="TOPRIM_TopoII"/>
</dbReference>
<dbReference type="PANTHER" id="PTHR10169:SF38">
    <property type="entry name" value="DNA TOPOISOMERASE 2"/>
    <property type="match status" value="1"/>
</dbReference>
<dbReference type="PANTHER" id="PTHR10169">
    <property type="entry name" value="DNA TOPOISOMERASE/GYRASE"/>
    <property type="match status" value="1"/>
</dbReference>
<dbReference type="Pfam" id="PF00204">
    <property type="entry name" value="DNA_gyraseB"/>
    <property type="match status" value="1"/>
</dbReference>
<dbReference type="Pfam" id="PF00521">
    <property type="entry name" value="DNA_topoisoIV"/>
    <property type="match status" value="1"/>
</dbReference>
<dbReference type="Pfam" id="PF02518">
    <property type="entry name" value="HATPase_c"/>
    <property type="match status" value="1"/>
</dbReference>
<dbReference type="Pfam" id="PF01751">
    <property type="entry name" value="Toprim"/>
    <property type="match status" value="1"/>
</dbReference>
<dbReference type="Pfam" id="PF16898">
    <property type="entry name" value="TOPRIM_C"/>
    <property type="match status" value="1"/>
</dbReference>
<dbReference type="PRINTS" id="PR01158">
    <property type="entry name" value="TOPISMRASEII"/>
</dbReference>
<dbReference type="PRINTS" id="PR00418">
    <property type="entry name" value="TPI2FAMILY"/>
</dbReference>
<dbReference type="SMART" id="SM00387">
    <property type="entry name" value="HATPase_c"/>
    <property type="match status" value="1"/>
</dbReference>
<dbReference type="SMART" id="SM00433">
    <property type="entry name" value="TOP2c"/>
    <property type="match status" value="1"/>
</dbReference>
<dbReference type="SMART" id="SM00434">
    <property type="entry name" value="TOP4c"/>
    <property type="match status" value="1"/>
</dbReference>
<dbReference type="SUPFAM" id="SSF55874">
    <property type="entry name" value="ATPase domain of HSP90 chaperone/DNA topoisomerase II/histidine kinase"/>
    <property type="match status" value="1"/>
</dbReference>
<dbReference type="SUPFAM" id="SSF54211">
    <property type="entry name" value="Ribosomal protein S5 domain 2-like"/>
    <property type="match status" value="1"/>
</dbReference>
<dbReference type="SUPFAM" id="SSF56719">
    <property type="entry name" value="Type II DNA topoisomerase"/>
    <property type="match status" value="1"/>
</dbReference>
<dbReference type="PROSITE" id="PS52040">
    <property type="entry name" value="TOPO_IIA"/>
    <property type="match status" value="1"/>
</dbReference>
<dbReference type="PROSITE" id="PS50880">
    <property type="entry name" value="TOPRIM"/>
    <property type="match status" value="1"/>
</dbReference>